<feature type="chain" id="PRO_0000234910" description="Beta-hexosaminidase">
    <location>
        <begin position="1"/>
        <end position="356"/>
    </location>
</feature>
<feature type="active site" description="Proton donor/acceptor" evidence="1">
    <location>
        <position position="193"/>
    </location>
</feature>
<feature type="active site" description="Nucleophile" evidence="1">
    <location>
        <position position="264"/>
    </location>
</feature>
<feature type="binding site" evidence="1">
    <location>
        <position position="75"/>
    </location>
    <ligand>
        <name>substrate</name>
    </ligand>
</feature>
<feature type="binding site" evidence="1">
    <location>
        <position position="83"/>
    </location>
    <ligand>
        <name>substrate</name>
    </ligand>
</feature>
<feature type="binding site" evidence="1">
    <location>
        <position position="150"/>
    </location>
    <ligand>
        <name>substrate</name>
    </ligand>
</feature>
<feature type="binding site" evidence="1">
    <location>
        <begin position="180"/>
        <end position="181"/>
    </location>
    <ligand>
        <name>substrate</name>
    </ligand>
</feature>
<feature type="site" description="Important for catalytic activity" evidence="1">
    <location>
        <position position="191"/>
    </location>
</feature>
<dbReference type="EC" id="3.2.1.52" evidence="1"/>
<dbReference type="EMBL" id="CR555306">
    <property type="protein sequence ID" value="CAI09283.1"/>
    <property type="molecule type" value="Genomic_DNA"/>
</dbReference>
<dbReference type="RefSeq" id="WP_011238953.1">
    <property type="nucleotide sequence ID" value="NC_006513.1"/>
</dbReference>
<dbReference type="SMR" id="Q5P081"/>
<dbReference type="STRING" id="76114.ebA5547"/>
<dbReference type="CAZy" id="GH3">
    <property type="family name" value="Glycoside Hydrolase Family 3"/>
</dbReference>
<dbReference type="KEGG" id="eba:ebA5547"/>
<dbReference type="eggNOG" id="COG1472">
    <property type="taxonomic scope" value="Bacteria"/>
</dbReference>
<dbReference type="HOGENOM" id="CLU_008392_0_0_4"/>
<dbReference type="OrthoDB" id="9786661at2"/>
<dbReference type="UniPathway" id="UPA00544"/>
<dbReference type="Proteomes" id="UP000006552">
    <property type="component" value="Chromosome"/>
</dbReference>
<dbReference type="GO" id="GO:0005737">
    <property type="term" value="C:cytoplasm"/>
    <property type="evidence" value="ECO:0007669"/>
    <property type="project" value="UniProtKB-SubCell"/>
</dbReference>
<dbReference type="GO" id="GO:0004563">
    <property type="term" value="F:beta-N-acetylhexosaminidase activity"/>
    <property type="evidence" value="ECO:0007669"/>
    <property type="project" value="UniProtKB-UniRule"/>
</dbReference>
<dbReference type="GO" id="GO:0005975">
    <property type="term" value="P:carbohydrate metabolic process"/>
    <property type="evidence" value="ECO:0007669"/>
    <property type="project" value="InterPro"/>
</dbReference>
<dbReference type="GO" id="GO:0051301">
    <property type="term" value="P:cell division"/>
    <property type="evidence" value="ECO:0007669"/>
    <property type="project" value="UniProtKB-KW"/>
</dbReference>
<dbReference type="GO" id="GO:0071555">
    <property type="term" value="P:cell wall organization"/>
    <property type="evidence" value="ECO:0007669"/>
    <property type="project" value="UniProtKB-KW"/>
</dbReference>
<dbReference type="GO" id="GO:0009252">
    <property type="term" value="P:peptidoglycan biosynthetic process"/>
    <property type="evidence" value="ECO:0007669"/>
    <property type="project" value="UniProtKB-KW"/>
</dbReference>
<dbReference type="GO" id="GO:0009254">
    <property type="term" value="P:peptidoglycan turnover"/>
    <property type="evidence" value="ECO:0007669"/>
    <property type="project" value="UniProtKB-UniRule"/>
</dbReference>
<dbReference type="GO" id="GO:0008360">
    <property type="term" value="P:regulation of cell shape"/>
    <property type="evidence" value="ECO:0007669"/>
    <property type="project" value="UniProtKB-KW"/>
</dbReference>
<dbReference type="Gene3D" id="3.20.20.300">
    <property type="entry name" value="Glycoside hydrolase, family 3, N-terminal domain"/>
    <property type="match status" value="1"/>
</dbReference>
<dbReference type="HAMAP" id="MF_00364">
    <property type="entry name" value="NagZ"/>
    <property type="match status" value="1"/>
</dbReference>
<dbReference type="InterPro" id="IPR022956">
    <property type="entry name" value="Beta_hexosaminidase_bac"/>
</dbReference>
<dbReference type="InterPro" id="IPR019800">
    <property type="entry name" value="Glyco_hydro_3_AS"/>
</dbReference>
<dbReference type="InterPro" id="IPR001764">
    <property type="entry name" value="Glyco_hydro_3_N"/>
</dbReference>
<dbReference type="InterPro" id="IPR036962">
    <property type="entry name" value="Glyco_hydro_3_N_sf"/>
</dbReference>
<dbReference type="InterPro" id="IPR017853">
    <property type="entry name" value="Glycoside_hydrolase_SF"/>
</dbReference>
<dbReference type="InterPro" id="IPR050226">
    <property type="entry name" value="NagZ_Beta-hexosaminidase"/>
</dbReference>
<dbReference type="NCBIfam" id="NF003740">
    <property type="entry name" value="PRK05337.1"/>
    <property type="match status" value="1"/>
</dbReference>
<dbReference type="PANTHER" id="PTHR30480:SF13">
    <property type="entry name" value="BETA-HEXOSAMINIDASE"/>
    <property type="match status" value="1"/>
</dbReference>
<dbReference type="PANTHER" id="PTHR30480">
    <property type="entry name" value="BETA-HEXOSAMINIDASE-RELATED"/>
    <property type="match status" value="1"/>
</dbReference>
<dbReference type="Pfam" id="PF00933">
    <property type="entry name" value="Glyco_hydro_3"/>
    <property type="match status" value="1"/>
</dbReference>
<dbReference type="SUPFAM" id="SSF51445">
    <property type="entry name" value="(Trans)glycosidases"/>
    <property type="match status" value="1"/>
</dbReference>
<dbReference type="PROSITE" id="PS00775">
    <property type="entry name" value="GLYCOSYL_HYDROL_F3"/>
    <property type="match status" value="1"/>
</dbReference>
<protein>
    <recommendedName>
        <fullName evidence="1">Beta-hexosaminidase</fullName>
        <ecNumber evidence="1">3.2.1.52</ecNumber>
    </recommendedName>
    <alternativeName>
        <fullName evidence="1">Beta-N-acetylhexosaminidase</fullName>
    </alternativeName>
    <alternativeName>
        <fullName evidence="1">N-acetyl-beta-glucosaminidase</fullName>
    </alternativeName>
</protein>
<sequence length="356" mass="38840">MTLQSDLPATVRPLGPVMLDVAGFALTEEERERLLDPLVGGVILFARNFRDSEQLQALTAEIHALRSPALIIAVDHEGGRVQRFRTDGFTRIPSMRCLGRLWERDHVAALESARCAGYVLAAELLAHGVDLSFTPVLDLDYGCSRVVGDRAFHRDPLVVAALAQSLVSGMADAGMGCVGKHFPGHGYAEADSHVEIPVDEREFDAIWTEDIAPYRHRLGRQLAGVMPAHVIYPRVDPNPAGFSRFWLQDILRGRVGFGGVIFSDDLTMEGATVVGDILARARAAFGAGCDVVLVCNRPDLAVDLLDRWAPDIAPESRARIEALRSRPQAADPFALELHPVYRQARDVVAGLVEDTA</sequence>
<reference key="1">
    <citation type="journal article" date="2005" name="Arch. Microbiol.">
        <title>The genome sequence of an anaerobic aromatic-degrading denitrifying bacterium, strain EbN1.</title>
        <authorList>
            <person name="Rabus R."/>
            <person name="Kube M."/>
            <person name="Heider J."/>
            <person name="Beck A."/>
            <person name="Heitmann K."/>
            <person name="Widdel F."/>
            <person name="Reinhardt R."/>
        </authorList>
    </citation>
    <scope>NUCLEOTIDE SEQUENCE [LARGE SCALE GENOMIC DNA]</scope>
    <source>
        <strain>DSM 19018 / LMG 30748 / EbN1</strain>
    </source>
</reference>
<gene>
    <name evidence="1" type="primary">nagZ</name>
    <name type="ordered locus">AZOSEA31580</name>
    <name type="ORF">ebA5547</name>
</gene>
<keyword id="KW-0131">Cell cycle</keyword>
<keyword id="KW-0132">Cell division</keyword>
<keyword id="KW-0133">Cell shape</keyword>
<keyword id="KW-0961">Cell wall biogenesis/degradation</keyword>
<keyword id="KW-0963">Cytoplasm</keyword>
<keyword id="KW-0326">Glycosidase</keyword>
<keyword id="KW-0378">Hydrolase</keyword>
<keyword id="KW-0573">Peptidoglycan synthesis</keyword>
<keyword id="KW-1185">Reference proteome</keyword>
<evidence type="ECO:0000255" key="1">
    <source>
        <dbReference type="HAMAP-Rule" id="MF_00364"/>
    </source>
</evidence>
<proteinExistence type="inferred from homology"/>
<organism>
    <name type="scientific">Aromatoleum aromaticum (strain DSM 19018 / LMG 30748 / EbN1)</name>
    <name type="common">Azoarcus sp. (strain EbN1)</name>
    <dbReference type="NCBI Taxonomy" id="76114"/>
    <lineage>
        <taxon>Bacteria</taxon>
        <taxon>Pseudomonadati</taxon>
        <taxon>Pseudomonadota</taxon>
        <taxon>Betaproteobacteria</taxon>
        <taxon>Rhodocyclales</taxon>
        <taxon>Rhodocyclaceae</taxon>
        <taxon>Aromatoleum</taxon>
    </lineage>
</organism>
<accession>Q5P081</accession>
<comment type="function">
    <text evidence="1">Plays a role in peptidoglycan recycling by cleaving the terminal beta-1,4-linked N-acetylglucosamine (GlcNAc) from peptide-linked peptidoglycan fragments, giving rise to free GlcNAc, anhydro-N-acetylmuramic acid and anhydro-N-acetylmuramic acid-linked peptides.</text>
</comment>
<comment type="catalytic activity">
    <reaction evidence="1">
        <text>Hydrolysis of terminal non-reducing N-acetyl-D-hexosamine residues in N-acetyl-beta-D-hexosaminides.</text>
        <dbReference type="EC" id="3.2.1.52"/>
    </reaction>
</comment>
<comment type="pathway">
    <text evidence="1">Cell wall biogenesis; peptidoglycan recycling.</text>
</comment>
<comment type="subcellular location">
    <subcellularLocation>
        <location evidence="1">Cytoplasm</location>
    </subcellularLocation>
</comment>
<comment type="similarity">
    <text evidence="1">Belongs to the glycosyl hydrolase 3 family. NagZ subfamily.</text>
</comment>
<name>NAGZ_AROAE</name>